<reference key="1">
    <citation type="journal article" date="2002" name="J. Bacteriol.">
        <title>Whole-genome comparison of Mycobacterium tuberculosis clinical and laboratory strains.</title>
        <authorList>
            <person name="Fleischmann R.D."/>
            <person name="Alland D."/>
            <person name="Eisen J.A."/>
            <person name="Carpenter L."/>
            <person name="White O."/>
            <person name="Peterson J.D."/>
            <person name="DeBoy R.T."/>
            <person name="Dodson R.J."/>
            <person name="Gwinn M.L."/>
            <person name="Haft D.H."/>
            <person name="Hickey E.K."/>
            <person name="Kolonay J.F."/>
            <person name="Nelson W.C."/>
            <person name="Umayam L.A."/>
            <person name="Ermolaeva M.D."/>
            <person name="Salzberg S.L."/>
            <person name="Delcher A."/>
            <person name="Utterback T.R."/>
            <person name="Weidman J.F."/>
            <person name="Khouri H.M."/>
            <person name="Gill J."/>
            <person name="Mikula A."/>
            <person name="Bishai W."/>
            <person name="Jacobs W.R. Jr."/>
            <person name="Venter J.C."/>
            <person name="Fraser C.M."/>
        </authorList>
    </citation>
    <scope>NUCLEOTIDE SEQUENCE [LARGE SCALE GENOMIC DNA]</scope>
    <source>
        <strain>CDC 1551 / Oshkosh</strain>
    </source>
</reference>
<keyword id="KW-0446">Lipid-binding</keyword>
<keyword id="KW-1185">Reference proteome</keyword>
<organism>
    <name type="scientific">Mycobacterium tuberculosis (strain CDC 1551 / Oshkosh)</name>
    <dbReference type="NCBI Taxonomy" id="83331"/>
    <lineage>
        <taxon>Bacteria</taxon>
        <taxon>Bacillati</taxon>
        <taxon>Actinomycetota</taxon>
        <taxon>Actinomycetes</taxon>
        <taxon>Mycobacteriales</taxon>
        <taxon>Mycobacteriaceae</taxon>
        <taxon>Mycobacterium</taxon>
        <taxon>Mycobacterium tuberculosis complex</taxon>
    </lineage>
</organism>
<comment type="function">
    <text evidence="1">May bind long-chain fatty acids, such as palmitate, and may play a role in lipid transport or fatty acid metabolism.</text>
</comment>
<evidence type="ECO:0000250" key="1"/>
<evidence type="ECO:0000250" key="2">
    <source>
        <dbReference type="UniProtKB" id="Q9X1H9"/>
    </source>
</evidence>
<evidence type="ECO:0000255" key="3">
    <source>
        <dbReference type="PROSITE-ProRule" id="PRU00815"/>
    </source>
</evidence>
<protein>
    <recommendedName>
        <fullName>DegV domain-containing protein MT2490</fullName>
    </recommendedName>
</protein>
<dbReference type="EMBL" id="AE000516">
    <property type="protein sequence ID" value="AAK46787.1"/>
    <property type="molecule type" value="Genomic_DNA"/>
</dbReference>
<dbReference type="PIR" id="D70685">
    <property type="entry name" value="D70685"/>
</dbReference>
<dbReference type="RefSeq" id="WP_003412381.1">
    <property type="nucleotide sequence ID" value="NZ_KK341227.1"/>
</dbReference>
<dbReference type="SMR" id="P9WP04"/>
<dbReference type="KEGG" id="mtc:MT2490"/>
<dbReference type="PATRIC" id="fig|83331.31.peg.2685"/>
<dbReference type="HOGENOM" id="CLU_048251_0_1_11"/>
<dbReference type="Proteomes" id="UP000001020">
    <property type="component" value="Chromosome"/>
</dbReference>
<dbReference type="GO" id="GO:0008289">
    <property type="term" value="F:lipid binding"/>
    <property type="evidence" value="ECO:0007669"/>
    <property type="project" value="UniProtKB-KW"/>
</dbReference>
<dbReference type="Gene3D" id="3.30.1180.10">
    <property type="match status" value="1"/>
</dbReference>
<dbReference type="Gene3D" id="3.40.50.10170">
    <property type="match status" value="1"/>
</dbReference>
<dbReference type="InterPro" id="IPR003797">
    <property type="entry name" value="DegV"/>
</dbReference>
<dbReference type="InterPro" id="IPR043168">
    <property type="entry name" value="DegV_C"/>
</dbReference>
<dbReference type="InterPro" id="IPR050270">
    <property type="entry name" value="DegV_domain_contain"/>
</dbReference>
<dbReference type="NCBIfam" id="TIGR00762">
    <property type="entry name" value="DegV"/>
    <property type="match status" value="1"/>
</dbReference>
<dbReference type="PANTHER" id="PTHR33434">
    <property type="entry name" value="DEGV DOMAIN-CONTAINING PROTEIN DR_1986-RELATED"/>
    <property type="match status" value="1"/>
</dbReference>
<dbReference type="PANTHER" id="PTHR33434:SF2">
    <property type="entry name" value="FATTY ACID-BINDING PROTEIN TM_1468"/>
    <property type="match status" value="1"/>
</dbReference>
<dbReference type="Pfam" id="PF02645">
    <property type="entry name" value="DegV"/>
    <property type="match status" value="1"/>
</dbReference>
<dbReference type="SUPFAM" id="SSF82549">
    <property type="entry name" value="DAK1/DegV-like"/>
    <property type="match status" value="1"/>
</dbReference>
<dbReference type="PROSITE" id="PS51482">
    <property type="entry name" value="DEGV"/>
    <property type="match status" value="1"/>
</dbReference>
<feature type="chain" id="PRO_0000427036" description="DegV domain-containing protein MT2490">
    <location>
        <begin position="1"/>
        <end position="280"/>
    </location>
</feature>
<feature type="domain" description="DegV" evidence="3">
    <location>
        <begin position="3"/>
        <end position="274"/>
    </location>
</feature>
<feature type="binding site" evidence="2">
    <location>
        <position position="89"/>
    </location>
    <ligand>
        <name>hexadecanoate</name>
        <dbReference type="ChEBI" id="CHEBI:7896"/>
    </ligand>
</feature>
<name>Y2417_MYCTO</name>
<proteinExistence type="inferred from homology"/>
<accession>P9WP04</accession>
<accession>L0TB58</accession>
<accession>P67368</accession>
<accession>P71726</accession>
<sequence>MTVVVVTDTSCRLPADLREQWSIRQVPLHILLDGLDLRDGVDEIPDDIHKRHATTAGATPVELSAAYQRALADSGGDGVVAVHISSALSGTFRAAELTAAELGPAVRVIDSRSAAMGVGFAALAAGRAAAAGDELDTVARAAAAAVSRIHAFVAVARLDNLRRSGRISGAKAWLGTALALKPLLSVDDGKLVLVQRVRTVSNATAVMIDRVCQLVGDRPAALAVHHVADPAAANDVAAALAERLPACEPAMVTAMGPVLALHVGAGAVGVCVDVGASPPA</sequence>
<gene>
    <name type="ordered locus">MT2490</name>
</gene>